<feature type="chain" id="PRO_0000379868" description="Putative hydro-lyase SSP0308">
    <location>
        <begin position="1"/>
        <end position="261"/>
    </location>
</feature>
<proteinExistence type="inferred from homology"/>
<accession>Q4A0F0</accession>
<organism>
    <name type="scientific">Staphylococcus saprophyticus subsp. saprophyticus (strain ATCC 15305 / DSM 20229 / NCIMB 8711 / NCTC 7292 / S-41)</name>
    <dbReference type="NCBI Taxonomy" id="342451"/>
    <lineage>
        <taxon>Bacteria</taxon>
        <taxon>Bacillati</taxon>
        <taxon>Bacillota</taxon>
        <taxon>Bacilli</taxon>
        <taxon>Bacillales</taxon>
        <taxon>Staphylococcaceae</taxon>
        <taxon>Staphylococcus</taxon>
    </lineage>
</organism>
<keyword id="KW-0456">Lyase</keyword>
<keyword id="KW-1185">Reference proteome</keyword>
<name>Y308_STAS1</name>
<reference key="1">
    <citation type="journal article" date="2005" name="Proc. Natl. Acad. Sci. U.S.A.">
        <title>Whole genome sequence of Staphylococcus saprophyticus reveals the pathogenesis of uncomplicated urinary tract infection.</title>
        <authorList>
            <person name="Kuroda M."/>
            <person name="Yamashita A."/>
            <person name="Hirakawa H."/>
            <person name="Kumano M."/>
            <person name="Morikawa K."/>
            <person name="Higashide M."/>
            <person name="Maruyama A."/>
            <person name="Inose Y."/>
            <person name="Matoba K."/>
            <person name="Toh H."/>
            <person name="Kuhara S."/>
            <person name="Hattori M."/>
            <person name="Ohta T."/>
        </authorList>
    </citation>
    <scope>NUCLEOTIDE SEQUENCE [LARGE SCALE GENOMIC DNA]</scope>
    <source>
        <strain>ATCC 15305 / DSM 20229 / NCIMB 8711 / NCTC 7292 / S-41</strain>
    </source>
</reference>
<sequence>MNIQDAQPSTLREMIKQGKLTGHTSGMAKGYVQANVVILPSKCAYDFLLFCFRNPKTCPLLDVSEKGNKSFTKYGVTADISTEVAAYRIYQYGELIETRANVDDLYTDDMVSFLIGCSFTFEHALLEAGIPIRHLEENHNVPMYVTNIPANPSGQFKGNITVSMRPMTMTQAIKATEITTRFKNVHGTPIHIGNPTEIGITDLALPDFGEPVTINENEVPVFWGCGVTPQSVALDAKPDLMITHAPGHMFITDIPDSQLSD</sequence>
<comment type="similarity">
    <text evidence="1">Belongs to the D-glutamate cyclase family.</text>
</comment>
<dbReference type="EC" id="4.2.1.-" evidence="1"/>
<dbReference type="EMBL" id="AP008934">
    <property type="protein sequence ID" value="BAE17453.1"/>
    <property type="molecule type" value="Genomic_DNA"/>
</dbReference>
<dbReference type="RefSeq" id="WP_011302289.1">
    <property type="nucleotide sequence ID" value="NC_007350.1"/>
</dbReference>
<dbReference type="SMR" id="Q4A0F0"/>
<dbReference type="DNASU" id="3615880"/>
<dbReference type="GeneID" id="3615880"/>
<dbReference type="KEGG" id="ssp:SSP0308"/>
<dbReference type="PATRIC" id="fig|342451.11.peg.311"/>
<dbReference type="eggNOG" id="COG4336">
    <property type="taxonomic scope" value="Bacteria"/>
</dbReference>
<dbReference type="HOGENOM" id="CLU_059759_0_0_9"/>
<dbReference type="OrthoDB" id="149585at2"/>
<dbReference type="Proteomes" id="UP000006371">
    <property type="component" value="Chromosome"/>
</dbReference>
<dbReference type="GO" id="GO:0016829">
    <property type="term" value="F:lyase activity"/>
    <property type="evidence" value="ECO:0007669"/>
    <property type="project" value="UniProtKB-KW"/>
</dbReference>
<dbReference type="FunFam" id="3.30.2040.10:FF:000001">
    <property type="entry name" value="D-glutamate cyclase, mitochondrial"/>
    <property type="match status" value="1"/>
</dbReference>
<dbReference type="Gene3D" id="3.40.1640.10">
    <property type="entry name" value="PSTPO5379-like"/>
    <property type="match status" value="1"/>
</dbReference>
<dbReference type="Gene3D" id="3.30.2040.10">
    <property type="entry name" value="PSTPO5379-like domain"/>
    <property type="match status" value="1"/>
</dbReference>
<dbReference type="HAMAP" id="MF_01830">
    <property type="entry name" value="Hydro_lyase"/>
    <property type="match status" value="1"/>
</dbReference>
<dbReference type="InterPro" id="IPR009906">
    <property type="entry name" value="D-Glu_cyclase"/>
</dbReference>
<dbReference type="InterPro" id="IPR038021">
    <property type="entry name" value="Putative_hydro-lyase"/>
</dbReference>
<dbReference type="InterPro" id="IPR016938">
    <property type="entry name" value="UPF0317"/>
</dbReference>
<dbReference type="NCBIfam" id="NF003969">
    <property type="entry name" value="PRK05463.1"/>
    <property type="match status" value="1"/>
</dbReference>
<dbReference type="PANTHER" id="PTHR32022">
    <property type="entry name" value="D-GLUTAMATE CYCLASE, MITOCHONDRIAL"/>
    <property type="match status" value="1"/>
</dbReference>
<dbReference type="PANTHER" id="PTHR32022:SF10">
    <property type="entry name" value="D-GLUTAMATE CYCLASE, MITOCHONDRIAL"/>
    <property type="match status" value="1"/>
</dbReference>
<dbReference type="Pfam" id="PF07286">
    <property type="entry name" value="D-Glu_cyclase"/>
    <property type="match status" value="1"/>
</dbReference>
<dbReference type="PIRSF" id="PIRSF029755">
    <property type="entry name" value="UCP029755"/>
    <property type="match status" value="1"/>
</dbReference>
<dbReference type="SUPFAM" id="SSF160920">
    <property type="entry name" value="PSTPO5379-like"/>
    <property type="match status" value="1"/>
</dbReference>
<gene>
    <name type="ordered locus">SSP0308</name>
</gene>
<protein>
    <recommendedName>
        <fullName evidence="1">Putative hydro-lyase SSP0308</fullName>
        <ecNumber evidence="1">4.2.1.-</ecNumber>
    </recommendedName>
</protein>
<evidence type="ECO:0000255" key="1">
    <source>
        <dbReference type="HAMAP-Rule" id="MF_01830"/>
    </source>
</evidence>